<comment type="function">
    <text evidence="1">Postsynaptic neurotoxin.</text>
</comment>
<comment type="subcellular location">
    <subcellularLocation>
        <location evidence="1">Secreted</location>
    </subcellularLocation>
</comment>
<comment type="tissue specificity">
    <text>Expressed by the venom gland.</text>
</comment>
<comment type="similarity">
    <text evidence="3">Belongs to the neurotoxin 12 (Hwtx-2) family. 02 (Hwtx-2) subfamily.</text>
</comment>
<reference key="1">
    <citation type="journal article" date="2010" name="J. Proteome Res.">
        <title>Molecular diversification of peptide toxins from the tarantula Haplopelma hainanum (Ornithoctonus hainana) venom based on transcriptomic, peptidomic, and genomic analyses.</title>
        <authorList>
            <person name="Tang X."/>
            <person name="Zhang Y."/>
            <person name="Hu W."/>
            <person name="Xu D."/>
            <person name="Tao H."/>
            <person name="Yang X."/>
            <person name="Li Y."/>
            <person name="Jiang L."/>
            <person name="Liang S."/>
        </authorList>
    </citation>
    <scope>NUCLEOTIDE SEQUENCE [LARGE SCALE GENOMIC DNA / MRNA]</scope>
    <source>
        <tissue>Venom gland</tissue>
    </source>
</reference>
<feature type="signal peptide" evidence="2">
    <location>
        <begin position="1"/>
        <end position="22"/>
    </location>
</feature>
<feature type="propeptide" id="PRO_0000400777" evidence="1">
    <location>
        <begin position="23"/>
        <end position="48"/>
    </location>
</feature>
<feature type="peptide" id="PRO_0000400778" description="U4-theraphotoxin-Hhn1c">
    <location>
        <begin position="49"/>
        <end position="85"/>
    </location>
</feature>
<feature type="disulfide bond" evidence="1">
    <location>
        <begin position="52"/>
        <end position="66"/>
    </location>
</feature>
<feature type="disulfide bond" evidence="1">
    <location>
        <begin position="56"/>
        <end position="77"/>
    </location>
</feature>
<feature type="disulfide bond" evidence="1">
    <location>
        <begin position="71"/>
        <end position="82"/>
    </location>
</feature>
<dbReference type="EMBL" id="GU292895">
    <property type="protein sequence ID" value="ADB56711.1"/>
    <property type="molecule type" value="mRNA"/>
</dbReference>
<dbReference type="EMBL" id="GU293074">
    <property type="protein sequence ID" value="ADB56890.1"/>
    <property type="molecule type" value="Genomic_DNA"/>
</dbReference>
<dbReference type="SMR" id="D2Y218"/>
<dbReference type="ArachnoServer" id="AS001689">
    <property type="toxin name" value="U4-theraphotoxin-Hhn1c"/>
</dbReference>
<dbReference type="GO" id="GO:0005576">
    <property type="term" value="C:extracellular region"/>
    <property type="evidence" value="ECO:0007669"/>
    <property type="project" value="UniProtKB-SubCell"/>
</dbReference>
<dbReference type="GO" id="GO:0035792">
    <property type="term" value="C:host cell postsynaptic membrane"/>
    <property type="evidence" value="ECO:0007669"/>
    <property type="project" value="UniProtKB-KW"/>
</dbReference>
<dbReference type="GO" id="GO:0090729">
    <property type="term" value="F:toxin activity"/>
    <property type="evidence" value="ECO:0007669"/>
    <property type="project" value="UniProtKB-KW"/>
</dbReference>
<dbReference type="InterPro" id="IPR012625">
    <property type="entry name" value="Hwtx-2-like"/>
</dbReference>
<dbReference type="Pfam" id="PF08089">
    <property type="entry name" value="Toxin_20"/>
    <property type="match status" value="1"/>
</dbReference>
<dbReference type="SUPFAM" id="SSF57059">
    <property type="entry name" value="omega toxin-like"/>
    <property type="match status" value="1"/>
</dbReference>
<organism>
    <name type="scientific">Cyriopagopus hainanus</name>
    <name type="common">Chinese bird spider</name>
    <name type="synonym">Haplopelma hainanum</name>
    <dbReference type="NCBI Taxonomy" id="209901"/>
    <lineage>
        <taxon>Eukaryota</taxon>
        <taxon>Metazoa</taxon>
        <taxon>Ecdysozoa</taxon>
        <taxon>Arthropoda</taxon>
        <taxon>Chelicerata</taxon>
        <taxon>Arachnida</taxon>
        <taxon>Araneae</taxon>
        <taxon>Mygalomorphae</taxon>
        <taxon>Theraphosidae</taxon>
        <taxon>Haplopelma</taxon>
    </lineage>
</organism>
<sequence length="85" mass="9370">MKVTLIAILTCAAVLVLHTTAAEELEAESQLMEVGMPDTELAAVDEERLFECSASCEIEKEGNKDCKKKKCKGGWKCKFNMCVKV</sequence>
<evidence type="ECO:0000250" key="1"/>
<evidence type="ECO:0000255" key="2"/>
<evidence type="ECO:0000305" key="3"/>
<proteinExistence type="evidence at transcript level"/>
<accession>D2Y218</accession>
<keyword id="KW-1015">Disulfide bond</keyword>
<keyword id="KW-0528">Neurotoxin</keyword>
<keyword id="KW-0629">Postsynaptic neurotoxin</keyword>
<keyword id="KW-0964">Secreted</keyword>
<keyword id="KW-0732">Signal</keyword>
<keyword id="KW-0800">Toxin</keyword>
<name>H2G01_CYRHA</name>
<protein>
    <recommendedName>
        <fullName>U4-theraphotoxin-Hhn1c</fullName>
        <shortName>U4-TRTX-Hhn1c</shortName>
    </recommendedName>
    <alternativeName>
        <fullName>Hainantoxin-II-7</fullName>
        <shortName>HNTX-II-7</shortName>
    </alternativeName>
</protein>